<name>ARGR_COLP3</name>
<organism>
    <name type="scientific">Colwellia psychrerythraea (strain 34H / ATCC BAA-681)</name>
    <name type="common">Vibrio psychroerythus</name>
    <dbReference type="NCBI Taxonomy" id="167879"/>
    <lineage>
        <taxon>Bacteria</taxon>
        <taxon>Pseudomonadati</taxon>
        <taxon>Pseudomonadota</taxon>
        <taxon>Gammaproteobacteria</taxon>
        <taxon>Alteromonadales</taxon>
        <taxon>Colwelliaceae</taxon>
        <taxon>Colwellia</taxon>
    </lineage>
</organism>
<accession>Q47VK9</accession>
<feature type="chain" id="PRO_1000023560" description="Arginine repressor">
    <location>
        <begin position="1"/>
        <end position="157"/>
    </location>
</feature>
<gene>
    <name evidence="1" type="primary">argR</name>
    <name type="ordered locus">CPS_4515</name>
</gene>
<reference key="1">
    <citation type="journal article" date="2005" name="Proc. Natl. Acad. Sci. U.S.A.">
        <title>The psychrophilic lifestyle as revealed by the genome sequence of Colwellia psychrerythraea 34H through genomic and proteomic analyses.</title>
        <authorList>
            <person name="Methe B.A."/>
            <person name="Nelson K.E."/>
            <person name="Deming J.W."/>
            <person name="Momen B."/>
            <person name="Melamud E."/>
            <person name="Zhang X."/>
            <person name="Moult J."/>
            <person name="Madupu R."/>
            <person name="Nelson W.C."/>
            <person name="Dodson R.J."/>
            <person name="Brinkac L.M."/>
            <person name="Daugherty S.C."/>
            <person name="Durkin A.S."/>
            <person name="DeBoy R.T."/>
            <person name="Kolonay J.F."/>
            <person name="Sullivan S.A."/>
            <person name="Zhou L."/>
            <person name="Davidsen T.M."/>
            <person name="Wu M."/>
            <person name="Huston A.L."/>
            <person name="Lewis M."/>
            <person name="Weaver B."/>
            <person name="Weidman J.F."/>
            <person name="Khouri H."/>
            <person name="Utterback T.R."/>
            <person name="Feldblyum T.V."/>
            <person name="Fraser C.M."/>
        </authorList>
    </citation>
    <scope>NUCLEOTIDE SEQUENCE [LARGE SCALE GENOMIC DNA]</scope>
    <source>
        <strain>34H / ATCC BAA-681</strain>
    </source>
</reference>
<dbReference type="EMBL" id="CP000083">
    <property type="protein sequence ID" value="AAZ26312.1"/>
    <property type="molecule type" value="Genomic_DNA"/>
</dbReference>
<dbReference type="RefSeq" id="WP_011045244.1">
    <property type="nucleotide sequence ID" value="NC_003910.7"/>
</dbReference>
<dbReference type="SMR" id="Q47VK9"/>
<dbReference type="STRING" id="167879.CPS_4515"/>
<dbReference type="KEGG" id="cps:CPS_4515"/>
<dbReference type="eggNOG" id="COG1438">
    <property type="taxonomic scope" value="Bacteria"/>
</dbReference>
<dbReference type="HOGENOM" id="CLU_097103_2_0_6"/>
<dbReference type="UniPathway" id="UPA00068"/>
<dbReference type="Proteomes" id="UP000000547">
    <property type="component" value="Chromosome"/>
</dbReference>
<dbReference type="GO" id="GO:0005737">
    <property type="term" value="C:cytoplasm"/>
    <property type="evidence" value="ECO:0007669"/>
    <property type="project" value="UniProtKB-SubCell"/>
</dbReference>
<dbReference type="GO" id="GO:0034618">
    <property type="term" value="F:arginine binding"/>
    <property type="evidence" value="ECO:0007669"/>
    <property type="project" value="InterPro"/>
</dbReference>
<dbReference type="GO" id="GO:0003677">
    <property type="term" value="F:DNA binding"/>
    <property type="evidence" value="ECO:0007669"/>
    <property type="project" value="UniProtKB-KW"/>
</dbReference>
<dbReference type="GO" id="GO:0003700">
    <property type="term" value="F:DNA-binding transcription factor activity"/>
    <property type="evidence" value="ECO:0007669"/>
    <property type="project" value="UniProtKB-UniRule"/>
</dbReference>
<dbReference type="GO" id="GO:0006526">
    <property type="term" value="P:L-arginine biosynthetic process"/>
    <property type="evidence" value="ECO:0007669"/>
    <property type="project" value="UniProtKB-UniPathway"/>
</dbReference>
<dbReference type="GO" id="GO:0051259">
    <property type="term" value="P:protein complex oligomerization"/>
    <property type="evidence" value="ECO:0007669"/>
    <property type="project" value="InterPro"/>
</dbReference>
<dbReference type="GO" id="GO:1900079">
    <property type="term" value="P:regulation of arginine biosynthetic process"/>
    <property type="evidence" value="ECO:0007669"/>
    <property type="project" value="UniProtKB-UniRule"/>
</dbReference>
<dbReference type="Gene3D" id="3.30.1360.40">
    <property type="match status" value="1"/>
</dbReference>
<dbReference type="Gene3D" id="1.10.10.10">
    <property type="entry name" value="Winged helix-like DNA-binding domain superfamily/Winged helix DNA-binding domain"/>
    <property type="match status" value="1"/>
</dbReference>
<dbReference type="HAMAP" id="MF_00173">
    <property type="entry name" value="Arg_repressor"/>
    <property type="match status" value="1"/>
</dbReference>
<dbReference type="InterPro" id="IPR001669">
    <property type="entry name" value="Arg_repress"/>
</dbReference>
<dbReference type="InterPro" id="IPR020899">
    <property type="entry name" value="Arg_repress_C"/>
</dbReference>
<dbReference type="InterPro" id="IPR036251">
    <property type="entry name" value="Arg_repress_C_sf"/>
</dbReference>
<dbReference type="InterPro" id="IPR020900">
    <property type="entry name" value="Arg_repress_DNA-bd"/>
</dbReference>
<dbReference type="InterPro" id="IPR036388">
    <property type="entry name" value="WH-like_DNA-bd_sf"/>
</dbReference>
<dbReference type="InterPro" id="IPR036390">
    <property type="entry name" value="WH_DNA-bd_sf"/>
</dbReference>
<dbReference type="NCBIfam" id="TIGR01529">
    <property type="entry name" value="argR_whole"/>
    <property type="match status" value="1"/>
</dbReference>
<dbReference type="NCBIfam" id="NF003457">
    <property type="entry name" value="PRK05066.1"/>
    <property type="match status" value="1"/>
</dbReference>
<dbReference type="PANTHER" id="PTHR34471">
    <property type="entry name" value="ARGININE REPRESSOR"/>
    <property type="match status" value="1"/>
</dbReference>
<dbReference type="PANTHER" id="PTHR34471:SF1">
    <property type="entry name" value="ARGININE REPRESSOR"/>
    <property type="match status" value="1"/>
</dbReference>
<dbReference type="Pfam" id="PF01316">
    <property type="entry name" value="Arg_repressor"/>
    <property type="match status" value="1"/>
</dbReference>
<dbReference type="Pfam" id="PF02863">
    <property type="entry name" value="Arg_repressor_C"/>
    <property type="match status" value="1"/>
</dbReference>
<dbReference type="PRINTS" id="PR01467">
    <property type="entry name" value="ARGREPRESSOR"/>
</dbReference>
<dbReference type="SUPFAM" id="SSF55252">
    <property type="entry name" value="C-terminal domain of arginine repressor"/>
    <property type="match status" value="1"/>
</dbReference>
<dbReference type="SUPFAM" id="SSF46785">
    <property type="entry name" value="Winged helix' DNA-binding domain"/>
    <property type="match status" value="1"/>
</dbReference>
<keyword id="KW-0028">Amino-acid biosynthesis</keyword>
<keyword id="KW-0055">Arginine biosynthesis</keyword>
<keyword id="KW-0963">Cytoplasm</keyword>
<keyword id="KW-0238">DNA-binding</keyword>
<keyword id="KW-0678">Repressor</keyword>
<keyword id="KW-0804">Transcription</keyword>
<keyword id="KW-0805">Transcription regulation</keyword>
<comment type="function">
    <text evidence="1">Regulates arginine biosynthesis genes.</text>
</comment>
<comment type="pathway">
    <text>Amino-acid biosynthesis; L-arginine biosynthesis [regulation].</text>
</comment>
<comment type="subcellular location">
    <subcellularLocation>
        <location evidence="1">Cytoplasm</location>
    </subcellularLocation>
</comment>
<comment type="similarity">
    <text evidence="1">Belongs to the ArgR family.</text>
</comment>
<protein>
    <recommendedName>
        <fullName evidence="1">Arginine repressor</fullName>
    </recommendedName>
</protein>
<sequence length="157" mass="17189">MSGLQKQEALVQEFKDLLKQEQFGSQGEIVDALKANGFDNISQSKISRMLSKFGAVRTRNARQEMVYCLPAELGVPTAQSPLKQLVLEIEHNEVMIIIQTSPGAAQLIARLLDSLSKSDGVLGTIAGDDTIFIAPSDVSKINETIKKLEQLFSKNLT</sequence>
<evidence type="ECO:0000255" key="1">
    <source>
        <dbReference type="HAMAP-Rule" id="MF_00173"/>
    </source>
</evidence>
<proteinExistence type="inferred from homology"/>